<sequence length="100" mass="11127">MITQERLLKVLRAPHISEKATMAAEKANTIVFKVAKDATKKEIKAAVEQLFEVEVKSVNTLITKGKTKRQGLRQGRRSDVKKAYVTLKEGQDLDFVGGAE</sequence>
<accession>Q7MPI6</accession>
<reference key="1">
    <citation type="journal article" date="2003" name="Genome Res.">
        <title>Comparative genome analysis of Vibrio vulnificus, a marine pathogen.</title>
        <authorList>
            <person name="Chen C.-Y."/>
            <person name="Wu K.-M."/>
            <person name="Chang Y.-C."/>
            <person name="Chang C.-H."/>
            <person name="Tsai H.-C."/>
            <person name="Liao T.-L."/>
            <person name="Liu Y.-M."/>
            <person name="Chen H.-J."/>
            <person name="Shen A.B.-T."/>
            <person name="Li J.-C."/>
            <person name="Su T.-L."/>
            <person name="Shao C.-P."/>
            <person name="Lee C.-T."/>
            <person name="Hor L.-I."/>
            <person name="Tsai S.-F."/>
        </authorList>
    </citation>
    <scope>NUCLEOTIDE SEQUENCE [LARGE SCALE GENOMIC DNA]</scope>
    <source>
        <strain>YJ016</strain>
    </source>
</reference>
<gene>
    <name evidence="1" type="primary">rplW</name>
    <name type="ordered locus">VV0377</name>
</gene>
<dbReference type="EMBL" id="BA000037">
    <property type="protein sequence ID" value="BAC93141.1"/>
    <property type="molecule type" value="Genomic_DNA"/>
</dbReference>
<dbReference type="RefSeq" id="WP_011078829.1">
    <property type="nucleotide sequence ID" value="NC_005139.1"/>
</dbReference>
<dbReference type="SMR" id="Q7MPI6"/>
<dbReference type="STRING" id="672.VV93_v1c03480"/>
<dbReference type="GeneID" id="93895064"/>
<dbReference type="KEGG" id="vvy:VV0377"/>
<dbReference type="eggNOG" id="COG0089">
    <property type="taxonomic scope" value="Bacteria"/>
</dbReference>
<dbReference type="HOGENOM" id="CLU_037562_3_1_6"/>
<dbReference type="Proteomes" id="UP000002675">
    <property type="component" value="Chromosome I"/>
</dbReference>
<dbReference type="GO" id="GO:1990904">
    <property type="term" value="C:ribonucleoprotein complex"/>
    <property type="evidence" value="ECO:0007669"/>
    <property type="project" value="UniProtKB-KW"/>
</dbReference>
<dbReference type="GO" id="GO:0005840">
    <property type="term" value="C:ribosome"/>
    <property type="evidence" value="ECO:0007669"/>
    <property type="project" value="UniProtKB-KW"/>
</dbReference>
<dbReference type="GO" id="GO:0019843">
    <property type="term" value="F:rRNA binding"/>
    <property type="evidence" value="ECO:0007669"/>
    <property type="project" value="UniProtKB-UniRule"/>
</dbReference>
<dbReference type="GO" id="GO:0003735">
    <property type="term" value="F:structural constituent of ribosome"/>
    <property type="evidence" value="ECO:0007669"/>
    <property type="project" value="InterPro"/>
</dbReference>
<dbReference type="GO" id="GO:0006412">
    <property type="term" value="P:translation"/>
    <property type="evidence" value="ECO:0007669"/>
    <property type="project" value="UniProtKB-UniRule"/>
</dbReference>
<dbReference type="FunFam" id="3.30.70.330:FF:000001">
    <property type="entry name" value="50S ribosomal protein L23"/>
    <property type="match status" value="1"/>
</dbReference>
<dbReference type="Gene3D" id="3.30.70.330">
    <property type="match status" value="1"/>
</dbReference>
<dbReference type="HAMAP" id="MF_01369_B">
    <property type="entry name" value="Ribosomal_uL23_B"/>
    <property type="match status" value="1"/>
</dbReference>
<dbReference type="InterPro" id="IPR012677">
    <property type="entry name" value="Nucleotide-bd_a/b_plait_sf"/>
</dbReference>
<dbReference type="InterPro" id="IPR013025">
    <property type="entry name" value="Ribosomal_uL23-like"/>
</dbReference>
<dbReference type="InterPro" id="IPR012678">
    <property type="entry name" value="Ribosomal_uL23/eL15/eS24_sf"/>
</dbReference>
<dbReference type="InterPro" id="IPR001014">
    <property type="entry name" value="Ribosomal_uL23_CS"/>
</dbReference>
<dbReference type="NCBIfam" id="NF004358">
    <property type="entry name" value="PRK05738.1-1"/>
    <property type="match status" value="1"/>
</dbReference>
<dbReference type="NCBIfam" id="NF004359">
    <property type="entry name" value="PRK05738.1-3"/>
    <property type="match status" value="1"/>
</dbReference>
<dbReference type="NCBIfam" id="NF004360">
    <property type="entry name" value="PRK05738.1-5"/>
    <property type="match status" value="1"/>
</dbReference>
<dbReference type="NCBIfam" id="NF004363">
    <property type="entry name" value="PRK05738.2-4"/>
    <property type="match status" value="1"/>
</dbReference>
<dbReference type="PANTHER" id="PTHR11620">
    <property type="entry name" value="60S RIBOSOMAL PROTEIN L23A"/>
    <property type="match status" value="1"/>
</dbReference>
<dbReference type="Pfam" id="PF00276">
    <property type="entry name" value="Ribosomal_L23"/>
    <property type="match status" value="1"/>
</dbReference>
<dbReference type="SUPFAM" id="SSF54189">
    <property type="entry name" value="Ribosomal proteins S24e, L23 and L15e"/>
    <property type="match status" value="1"/>
</dbReference>
<dbReference type="PROSITE" id="PS00050">
    <property type="entry name" value="RIBOSOMAL_L23"/>
    <property type="match status" value="1"/>
</dbReference>
<protein>
    <recommendedName>
        <fullName evidence="1">Large ribosomal subunit protein uL23</fullName>
    </recommendedName>
    <alternativeName>
        <fullName evidence="2">50S ribosomal protein L23</fullName>
    </alternativeName>
</protein>
<name>RL23_VIBVY</name>
<comment type="function">
    <text evidence="1">One of the early assembly proteins it binds 23S rRNA. One of the proteins that surrounds the polypeptide exit tunnel on the outside of the ribosome. Forms the main docking site for trigger factor binding to the ribosome.</text>
</comment>
<comment type="subunit">
    <text evidence="1">Part of the 50S ribosomal subunit. Contacts protein L29, and trigger factor when it is bound to the ribosome.</text>
</comment>
<comment type="similarity">
    <text evidence="1">Belongs to the universal ribosomal protein uL23 family.</text>
</comment>
<keyword id="KW-0687">Ribonucleoprotein</keyword>
<keyword id="KW-0689">Ribosomal protein</keyword>
<keyword id="KW-0694">RNA-binding</keyword>
<keyword id="KW-0699">rRNA-binding</keyword>
<feature type="chain" id="PRO_0000272872" description="Large ribosomal subunit protein uL23">
    <location>
        <begin position="1"/>
        <end position="100"/>
    </location>
</feature>
<evidence type="ECO:0000255" key="1">
    <source>
        <dbReference type="HAMAP-Rule" id="MF_01369"/>
    </source>
</evidence>
<evidence type="ECO:0000305" key="2"/>
<organism>
    <name type="scientific">Vibrio vulnificus (strain YJ016)</name>
    <dbReference type="NCBI Taxonomy" id="196600"/>
    <lineage>
        <taxon>Bacteria</taxon>
        <taxon>Pseudomonadati</taxon>
        <taxon>Pseudomonadota</taxon>
        <taxon>Gammaproteobacteria</taxon>
        <taxon>Vibrionales</taxon>
        <taxon>Vibrionaceae</taxon>
        <taxon>Vibrio</taxon>
    </lineage>
</organism>
<proteinExistence type="inferred from homology"/>